<evidence type="ECO:0000256" key="1">
    <source>
        <dbReference type="SAM" id="MobiDB-lite"/>
    </source>
</evidence>
<evidence type="ECO:0000269" key="2">
    <source>
    </source>
</evidence>
<evidence type="ECO:0000303" key="3">
    <source>
    </source>
</evidence>
<evidence type="ECO:0000305" key="4"/>
<keyword id="KW-0929">Antimicrobial</keyword>
<keyword id="KW-0903">Direct protein sequencing</keyword>
<keyword id="KW-0295">Fungicide</keyword>
<keyword id="KW-1185">Reference proteome</keyword>
<name>CERI_CICAR</name>
<dbReference type="Proteomes" id="UP000087171">
    <property type="component" value="Unplaced"/>
</dbReference>
<dbReference type="GO" id="GO:0050832">
    <property type="term" value="P:defense response to fungus"/>
    <property type="evidence" value="ECO:0007669"/>
    <property type="project" value="UniProtKB-KW"/>
</dbReference>
<dbReference type="GO" id="GO:0031640">
    <property type="term" value="P:killing of cells of another organism"/>
    <property type="evidence" value="ECO:0007669"/>
    <property type="project" value="UniProtKB-KW"/>
</dbReference>
<comment type="function">
    <text evidence="2">Has antifungal activity against B.cinerea, F.oxysporum and M.arachidicola. Inhibits cell-free translation in rabbit reticulocyte lysate system.</text>
</comment>
<sequence length="20" mass="2257">ARCENFADSYRQPPISSSQT</sequence>
<organism>
    <name type="scientific">Cicer arietinum</name>
    <name type="common">Chickpea</name>
    <name type="synonym">Garbanzo</name>
    <dbReference type="NCBI Taxonomy" id="3827"/>
    <lineage>
        <taxon>Eukaryota</taxon>
        <taxon>Viridiplantae</taxon>
        <taxon>Streptophyta</taxon>
        <taxon>Embryophyta</taxon>
        <taxon>Tracheophyta</taxon>
        <taxon>Spermatophyta</taxon>
        <taxon>Magnoliopsida</taxon>
        <taxon>eudicotyledons</taxon>
        <taxon>Gunneridae</taxon>
        <taxon>Pentapetalae</taxon>
        <taxon>rosids</taxon>
        <taxon>fabids</taxon>
        <taxon>Fabales</taxon>
        <taxon>Fabaceae</taxon>
        <taxon>Papilionoideae</taxon>
        <taxon>50 kb inversion clade</taxon>
        <taxon>NPAAA clade</taxon>
        <taxon>Hologalegina</taxon>
        <taxon>IRL clade</taxon>
        <taxon>Cicereae</taxon>
        <taxon>Cicer</taxon>
    </lineage>
</organism>
<reference evidence="4" key="1">
    <citation type="journal article" date="2002" name="Peptides">
        <title>Cicerin and arietin, novel chickpea peptides with different antifungal potencies.</title>
        <authorList>
            <person name="Ye X.Y."/>
            <person name="Ng T.B."/>
            <person name="Rao P.F."/>
        </authorList>
    </citation>
    <scope>PROTEIN SEQUENCE</scope>
    <scope>FUNCTION</scope>
    <source>
        <tissue evidence="2">Seed</tissue>
    </source>
</reference>
<feature type="peptide" id="PRO_0000045096" description="Cicerin">
    <location>
        <begin position="1"/>
        <end position="20" status="greater than"/>
    </location>
</feature>
<feature type="region of interest" description="Disordered" evidence="1">
    <location>
        <begin position="1"/>
        <end position="20"/>
    </location>
</feature>
<feature type="non-terminal residue" evidence="3">
    <location>
        <position position="20"/>
    </location>
</feature>
<proteinExistence type="evidence at protein level"/>
<accession>P83987</accession>
<protein>
    <recommendedName>
        <fullName>Cicerin</fullName>
    </recommendedName>
</protein>